<dbReference type="EC" id="3.4.23.-" evidence="1"/>
<dbReference type="EMBL" id="BC111200">
    <property type="protein sequence ID" value="AAI11201.1"/>
    <property type="molecule type" value="mRNA"/>
</dbReference>
<dbReference type="RefSeq" id="NP_001071488.1">
    <property type="nucleotide sequence ID" value="NM_001078020.2"/>
</dbReference>
<dbReference type="SMR" id="Q2T9Z1"/>
<dbReference type="FunCoup" id="Q2T9Z1">
    <property type="interactions" value="1382"/>
</dbReference>
<dbReference type="STRING" id="9913.ENSBTAP00000003750"/>
<dbReference type="MEROPS" id="A28.A01"/>
<dbReference type="PaxDb" id="9913-ENSBTAP00000003750"/>
<dbReference type="GeneID" id="539082"/>
<dbReference type="KEGG" id="bta:539082"/>
<dbReference type="CTD" id="414301"/>
<dbReference type="eggNOG" id="KOG0012">
    <property type="taxonomic scope" value="Eukaryota"/>
</dbReference>
<dbReference type="InParanoid" id="Q2T9Z1"/>
<dbReference type="OrthoDB" id="1047367at2759"/>
<dbReference type="Proteomes" id="UP000009136">
    <property type="component" value="Unplaced"/>
</dbReference>
<dbReference type="GO" id="GO:0004190">
    <property type="term" value="F:aspartic-type endopeptidase activity"/>
    <property type="evidence" value="ECO:0007669"/>
    <property type="project" value="UniProtKB-KW"/>
</dbReference>
<dbReference type="GO" id="GO:0072711">
    <property type="term" value="P:cellular response to hydroxyurea"/>
    <property type="evidence" value="ECO:0000250"/>
    <property type="project" value="UniProtKB"/>
</dbReference>
<dbReference type="GO" id="GO:0010498">
    <property type="term" value="P:proteasomal protein catabolic process"/>
    <property type="evidence" value="ECO:0000250"/>
    <property type="project" value="UniProtKB"/>
</dbReference>
<dbReference type="GO" id="GO:0097752">
    <property type="term" value="P:regulation of DNA stability"/>
    <property type="evidence" value="ECO:0000250"/>
    <property type="project" value="UniProtKB"/>
</dbReference>
<dbReference type="GO" id="GO:0031647">
    <property type="term" value="P:regulation of protein stability"/>
    <property type="evidence" value="ECO:0000250"/>
    <property type="project" value="UniProtKB"/>
</dbReference>
<dbReference type="CDD" id="cd05479">
    <property type="entry name" value="RP_DDI"/>
    <property type="match status" value="1"/>
</dbReference>
<dbReference type="CDD" id="cd01796">
    <property type="entry name" value="Ubl_Ddi1_like"/>
    <property type="match status" value="1"/>
</dbReference>
<dbReference type="FunFam" id="2.40.70.10:FF:000005">
    <property type="entry name" value="DNA damage inducible 1 homolog 2"/>
    <property type="match status" value="1"/>
</dbReference>
<dbReference type="FunFam" id="3.10.20.90:FF:000107">
    <property type="entry name" value="protein DDI1 homolog 2 isoform X1"/>
    <property type="match status" value="1"/>
</dbReference>
<dbReference type="Gene3D" id="2.40.70.10">
    <property type="entry name" value="Acid Proteases"/>
    <property type="match status" value="1"/>
</dbReference>
<dbReference type="Gene3D" id="3.10.20.90">
    <property type="entry name" value="Phosphatidylinositol 3-kinase Catalytic Subunit, Chain A, domain 1"/>
    <property type="match status" value="1"/>
</dbReference>
<dbReference type="InterPro" id="IPR033882">
    <property type="entry name" value="DDI1_N"/>
</dbReference>
<dbReference type="InterPro" id="IPR019103">
    <property type="entry name" value="Peptidase_aspartic_DDI1-type"/>
</dbReference>
<dbReference type="InterPro" id="IPR021109">
    <property type="entry name" value="Peptidase_aspartic_dom_sf"/>
</dbReference>
<dbReference type="InterPro" id="IPR000626">
    <property type="entry name" value="Ubiquitin-like_dom"/>
</dbReference>
<dbReference type="InterPro" id="IPR029071">
    <property type="entry name" value="Ubiquitin-like_domsf"/>
</dbReference>
<dbReference type="PANTHER" id="PTHR15397:SF3">
    <property type="entry name" value="DNA DAMAGE INDUCIBLE 1 HOMOLOG 2"/>
    <property type="match status" value="1"/>
</dbReference>
<dbReference type="PANTHER" id="PTHR15397">
    <property type="entry name" value="SODIUM-GLUCOSE COTRANSPORTER REGULATORY PROTEIN -RELATED"/>
    <property type="match status" value="1"/>
</dbReference>
<dbReference type="Pfam" id="PF09668">
    <property type="entry name" value="Asp_protease"/>
    <property type="match status" value="1"/>
</dbReference>
<dbReference type="Pfam" id="PF24669">
    <property type="entry name" value="Ddi2_HDD"/>
    <property type="match status" value="1"/>
</dbReference>
<dbReference type="SUPFAM" id="SSF50630">
    <property type="entry name" value="Acid proteases"/>
    <property type="match status" value="1"/>
</dbReference>
<dbReference type="SUPFAM" id="SSF54236">
    <property type="entry name" value="Ubiquitin-like"/>
    <property type="match status" value="1"/>
</dbReference>
<dbReference type="PROSITE" id="PS50053">
    <property type="entry name" value="UBIQUITIN_2"/>
    <property type="match status" value="1"/>
</dbReference>
<proteinExistence type="evidence at transcript level"/>
<keyword id="KW-0064">Aspartyl protease</keyword>
<keyword id="KW-0378">Hydrolase</keyword>
<keyword id="KW-0645">Protease</keyword>
<keyword id="KW-1185">Reference proteome</keyword>
<comment type="function">
    <text evidence="1 2">Probable aspartic protease (By similarity). Seems to act as a proteasomal shuttle which links the proteasome and replication fork proteins like RTF2. Required, with DDI2, for cellular survival following replication stress. Together or redudantly with DDI2, removes RTF2 from stalled forks to allow cell cycle progression after replication stress and maintains genome integrity (By similarity).</text>
</comment>
<comment type="similarity">
    <text evidence="5">Belongs to the DDI1 family.</text>
</comment>
<organism>
    <name type="scientific">Bos taurus</name>
    <name type="common">Bovine</name>
    <dbReference type="NCBI Taxonomy" id="9913"/>
    <lineage>
        <taxon>Eukaryota</taxon>
        <taxon>Metazoa</taxon>
        <taxon>Chordata</taxon>
        <taxon>Craniata</taxon>
        <taxon>Vertebrata</taxon>
        <taxon>Euteleostomi</taxon>
        <taxon>Mammalia</taxon>
        <taxon>Eutheria</taxon>
        <taxon>Laurasiatheria</taxon>
        <taxon>Artiodactyla</taxon>
        <taxon>Ruminantia</taxon>
        <taxon>Pecora</taxon>
        <taxon>Bovidae</taxon>
        <taxon>Bovinae</taxon>
        <taxon>Bos</taxon>
    </lineage>
</organism>
<gene>
    <name type="primary">DDI1</name>
</gene>
<reference key="1">
    <citation type="submission" date="2005-12" db="EMBL/GenBank/DDBJ databases">
        <authorList>
            <consortium name="NIH - Mammalian Gene Collection (MGC) project"/>
        </authorList>
    </citation>
    <scope>NUCLEOTIDE SEQUENCE [LARGE SCALE MRNA]</scope>
    <source>
        <strain>Crossbred X Angus</strain>
        <tissue>Liver</tissue>
    </source>
</reference>
<accession>Q2T9Z1</accession>
<name>DDI1_BOVIN</name>
<feature type="chain" id="PRO_0000287085" description="Protein DDI1 homolog 1">
    <location>
        <begin position="1"/>
        <end position="396"/>
    </location>
</feature>
<feature type="domain" description="Ubiquitin-like" evidence="3">
    <location>
        <begin position="1"/>
        <end position="81"/>
    </location>
</feature>
<feature type="region of interest" description="Disordered" evidence="4">
    <location>
        <begin position="84"/>
        <end position="137"/>
    </location>
</feature>
<feature type="region of interest" description="Disordered" evidence="4">
    <location>
        <begin position="367"/>
        <end position="396"/>
    </location>
</feature>
<feature type="compositionally biased region" description="Polar residues" evidence="4">
    <location>
        <begin position="104"/>
        <end position="118"/>
    </location>
</feature>
<feature type="compositionally biased region" description="Basic and acidic residues" evidence="4">
    <location>
        <begin position="387"/>
        <end position="396"/>
    </location>
</feature>
<feature type="active site" evidence="5">
    <location>
        <position position="254"/>
    </location>
</feature>
<sequence>MLLTVYCVRRDLSEATFSLQVRPDFELHNFLVLCELESGIPAEETQIVYMERLLVNDHCSLGSYGLKDGDMVILLQKEAMRPRSPERAAGLCSMEPAGPALPGTSGSRPHQRAQSAQHSSRRGSGEKAGPGQGLDSPALVRSMLLSSPHDLSLLKERNPSLAEALLSGNLESFSQVLMEQQRERALREQERLRLFSADPFDLEAQAKIEEEIRQQNIEENMSIAMEEAPESFGQVAMLYINCRVNGHPLKAFVDSGAQMTIMNQVCAERCNIIRLVDRRWAGVAKGVGTQRILGRVHLAQIQIEGDFLQCSFSILEEQPMDMLLGLDMLRRHQCSIDLKRNVLVIGTTGTQTSFLPEGELPPCAKLVSGMGPEESSDKETANAIKHSVMDSGRKKH</sequence>
<protein>
    <recommendedName>
        <fullName>Protein DDI1 homolog 1</fullName>
        <ecNumber evidence="1">3.4.23.-</ecNumber>
    </recommendedName>
</protein>
<evidence type="ECO:0000250" key="1">
    <source>
        <dbReference type="UniProtKB" id="I7HUG0"/>
    </source>
</evidence>
<evidence type="ECO:0000250" key="2">
    <source>
        <dbReference type="UniProtKB" id="Q8WTU0"/>
    </source>
</evidence>
<evidence type="ECO:0000255" key="3">
    <source>
        <dbReference type="PROSITE-ProRule" id="PRU00214"/>
    </source>
</evidence>
<evidence type="ECO:0000256" key="4">
    <source>
        <dbReference type="SAM" id="MobiDB-lite"/>
    </source>
</evidence>
<evidence type="ECO:0000305" key="5"/>